<feature type="chain" id="PRO_0000380388" description="DNA ligase">
    <location>
        <begin position="1"/>
        <end position="668"/>
    </location>
</feature>
<feature type="domain" description="BRCT" evidence="1">
    <location>
        <begin position="591"/>
        <end position="668"/>
    </location>
</feature>
<feature type="active site" description="N6-AMP-lysine intermediate" evidence="1">
    <location>
        <position position="119"/>
    </location>
</feature>
<feature type="binding site" evidence="1">
    <location>
        <begin position="34"/>
        <end position="38"/>
    </location>
    <ligand>
        <name>NAD(+)</name>
        <dbReference type="ChEBI" id="CHEBI:57540"/>
    </ligand>
</feature>
<feature type="binding site" evidence="1">
    <location>
        <begin position="83"/>
        <end position="84"/>
    </location>
    <ligand>
        <name>NAD(+)</name>
        <dbReference type="ChEBI" id="CHEBI:57540"/>
    </ligand>
</feature>
<feature type="binding site" evidence="1">
    <location>
        <position position="117"/>
    </location>
    <ligand>
        <name>NAD(+)</name>
        <dbReference type="ChEBI" id="CHEBI:57540"/>
    </ligand>
</feature>
<feature type="binding site" evidence="1">
    <location>
        <position position="140"/>
    </location>
    <ligand>
        <name>NAD(+)</name>
        <dbReference type="ChEBI" id="CHEBI:57540"/>
    </ligand>
</feature>
<feature type="binding site" evidence="1">
    <location>
        <position position="177"/>
    </location>
    <ligand>
        <name>NAD(+)</name>
        <dbReference type="ChEBI" id="CHEBI:57540"/>
    </ligand>
</feature>
<feature type="binding site" evidence="1">
    <location>
        <position position="293"/>
    </location>
    <ligand>
        <name>NAD(+)</name>
        <dbReference type="ChEBI" id="CHEBI:57540"/>
    </ligand>
</feature>
<feature type="binding site" evidence="1">
    <location>
        <position position="317"/>
    </location>
    <ligand>
        <name>NAD(+)</name>
        <dbReference type="ChEBI" id="CHEBI:57540"/>
    </ligand>
</feature>
<feature type="binding site" evidence="1">
    <location>
        <position position="411"/>
    </location>
    <ligand>
        <name>Zn(2+)</name>
        <dbReference type="ChEBI" id="CHEBI:29105"/>
    </ligand>
</feature>
<feature type="binding site" evidence="1">
    <location>
        <position position="414"/>
    </location>
    <ligand>
        <name>Zn(2+)</name>
        <dbReference type="ChEBI" id="CHEBI:29105"/>
    </ligand>
</feature>
<feature type="binding site" evidence="1">
    <location>
        <position position="429"/>
    </location>
    <ligand>
        <name>Zn(2+)</name>
        <dbReference type="ChEBI" id="CHEBI:29105"/>
    </ligand>
</feature>
<feature type="binding site" evidence="1">
    <location>
        <position position="434"/>
    </location>
    <ligand>
        <name>Zn(2+)</name>
        <dbReference type="ChEBI" id="CHEBI:29105"/>
    </ligand>
</feature>
<dbReference type="EC" id="6.5.1.2" evidence="1"/>
<dbReference type="EMBL" id="CP001124">
    <property type="protein sequence ID" value="ACH38355.1"/>
    <property type="molecule type" value="Genomic_DNA"/>
</dbReference>
<dbReference type="RefSeq" id="WP_012529767.1">
    <property type="nucleotide sequence ID" value="NC_011146.1"/>
</dbReference>
<dbReference type="SMR" id="B5EIJ0"/>
<dbReference type="STRING" id="404380.Gbem_1336"/>
<dbReference type="KEGG" id="gbm:Gbem_1336"/>
<dbReference type="eggNOG" id="COG0272">
    <property type="taxonomic scope" value="Bacteria"/>
</dbReference>
<dbReference type="HOGENOM" id="CLU_007764_2_1_7"/>
<dbReference type="OrthoDB" id="9759736at2"/>
<dbReference type="Proteomes" id="UP000008825">
    <property type="component" value="Chromosome"/>
</dbReference>
<dbReference type="GO" id="GO:0005829">
    <property type="term" value="C:cytosol"/>
    <property type="evidence" value="ECO:0007669"/>
    <property type="project" value="TreeGrafter"/>
</dbReference>
<dbReference type="GO" id="GO:0003677">
    <property type="term" value="F:DNA binding"/>
    <property type="evidence" value="ECO:0007669"/>
    <property type="project" value="InterPro"/>
</dbReference>
<dbReference type="GO" id="GO:0003911">
    <property type="term" value="F:DNA ligase (NAD+) activity"/>
    <property type="evidence" value="ECO:0007669"/>
    <property type="project" value="UniProtKB-UniRule"/>
</dbReference>
<dbReference type="GO" id="GO:0046872">
    <property type="term" value="F:metal ion binding"/>
    <property type="evidence" value="ECO:0007669"/>
    <property type="project" value="UniProtKB-KW"/>
</dbReference>
<dbReference type="GO" id="GO:0006281">
    <property type="term" value="P:DNA repair"/>
    <property type="evidence" value="ECO:0007669"/>
    <property type="project" value="UniProtKB-KW"/>
</dbReference>
<dbReference type="GO" id="GO:0006260">
    <property type="term" value="P:DNA replication"/>
    <property type="evidence" value="ECO:0007669"/>
    <property type="project" value="UniProtKB-KW"/>
</dbReference>
<dbReference type="CDD" id="cd17748">
    <property type="entry name" value="BRCT_DNA_ligase_like"/>
    <property type="match status" value="1"/>
</dbReference>
<dbReference type="CDD" id="cd00114">
    <property type="entry name" value="LIGANc"/>
    <property type="match status" value="1"/>
</dbReference>
<dbReference type="FunFam" id="1.10.150.20:FF:000006">
    <property type="entry name" value="DNA ligase"/>
    <property type="match status" value="1"/>
</dbReference>
<dbReference type="FunFam" id="1.10.150.20:FF:000007">
    <property type="entry name" value="DNA ligase"/>
    <property type="match status" value="1"/>
</dbReference>
<dbReference type="FunFam" id="2.40.50.140:FF:000012">
    <property type="entry name" value="DNA ligase"/>
    <property type="match status" value="1"/>
</dbReference>
<dbReference type="FunFam" id="3.30.470.30:FF:000001">
    <property type="entry name" value="DNA ligase"/>
    <property type="match status" value="1"/>
</dbReference>
<dbReference type="FunFam" id="3.40.50.10190:FF:000054">
    <property type="entry name" value="DNA ligase"/>
    <property type="match status" value="1"/>
</dbReference>
<dbReference type="Gene3D" id="6.20.10.30">
    <property type="match status" value="1"/>
</dbReference>
<dbReference type="Gene3D" id="1.10.150.20">
    <property type="entry name" value="5' to 3' exonuclease, C-terminal subdomain"/>
    <property type="match status" value="2"/>
</dbReference>
<dbReference type="Gene3D" id="3.40.50.10190">
    <property type="entry name" value="BRCT domain"/>
    <property type="match status" value="1"/>
</dbReference>
<dbReference type="Gene3D" id="3.30.470.30">
    <property type="entry name" value="DNA ligase/mRNA capping enzyme"/>
    <property type="match status" value="1"/>
</dbReference>
<dbReference type="Gene3D" id="1.10.287.610">
    <property type="entry name" value="Helix hairpin bin"/>
    <property type="match status" value="1"/>
</dbReference>
<dbReference type="Gene3D" id="2.40.50.140">
    <property type="entry name" value="Nucleic acid-binding proteins"/>
    <property type="match status" value="1"/>
</dbReference>
<dbReference type="HAMAP" id="MF_01588">
    <property type="entry name" value="DNA_ligase_A"/>
    <property type="match status" value="1"/>
</dbReference>
<dbReference type="InterPro" id="IPR001357">
    <property type="entry name" value="BRCT_dom"/>
</dbReference>
<dbReference type="InterPro" id="IPR036420">
    <property type="entry name" value="BRCT_dom_sf"/>
</dbReference>
<dbReference type="InterPro" id="IPR041663">
    <property type="entry name" value="DisA/LigA_HHH"/>
</dbReference>
<dbReference type="InterPro" id="IPR001679">
    <property type="entry name" value="DNA_ligase"/>
</dbReference>
<dbReference type="InterPro" id="IPR018239">
    <property type="entry name" value="DNA_ligase_AS"/>
</dbReference>
<dbReference type="InterPro" id="IPR033136">
    <property type="entry name" value="DNA_ligase_CS"/>
</dbReference>
<dbReference type="InterPro" id="IPR013839">
    <property type="entry name" value="DNAligase_adenylation"/>
</dbReference>
<dbReference type="InterPro" id="IPR013840">
    <property type="entry name" value="DNAligase_N"/>
</dbReference>
<dbReference type="InterPro" id="IPR003583">
    <property type="entry name" value="Hlx-hairpin-Hlx_DNA-bd_motif"/>
</dbReference>
<dbReference type="InterPro" id="IPR012340">
    <property type="entry name" value="NA-bd_OB-fold"/>
</dbReference>
<dbReference type="InterPro" id="IPR004150">
    <property type="entry name" value="NAD_DNA_ligase_OB"/>
</dbReference>
<dbReference type="InterPro" id="IPR010994">
    <property type="entry name" value="RuvA_2-like"/>
</dbReference>
<dbReference type="InterPro" id="IPR004149">
    <property type="entry name" value="Znf_DNAligase_C4"/>
</dbReference>
<dbReference type="NCBIfam" id="TIGR00575">
    <property type="entry name" value="dnlj"/>
    <property type="match status" value="1"/>
</dbReference>
<dbReference type="NCBIfam" id="NF005932">
    <property type="entry name" value="PRK07956.1"/>
    <property type="match status" value="1"/>
</dbReference>
<dbReference type="PANTHER" id="PTHR23389">
    <property type="entry name" value="CHROMOSOME TRANSMISSION FIDELITY FACTOR 18"/>
    <property type="match status" value="1"/>
</dbReference>
<dbReference type="PANTHER" id="PTHR23389:SF9">
    <property type="entry name" value="DNA LIGASE"/>
    <property type="match status" value="1"/>
</dbReference>
<dbReference type="Pfam" id="PF00533">
    <property type="entry name" value="BRCT"/>
    <property type="match status" value="1"/>
</dbReference>
<dbReference type="Pfam" id="PF01653">
    <property type="entry name" value="DNA_ligase_aden"/>
    <property type="match status" value="1"/>
</dbReference>
<dbReference type="Pfam" id="PF03120">
    <property type="entry name" value="DNA_ligase_OB"/>
    <property type="match status" value="1"/>
</dbReference>
<dbReference type="Pfam" id="PF03119">
    <property type="entry name" value="DNA_ligase_ZBD"/>
    <property type="match status" value="1"/>
</dbReference>
<dbReference type="Pfam" id="PF12826">
    <property type="entry name" value="HHH_2"/>
    <property type="match status" value="1"/>
</dbReference>
<dbReference type="Pfam" id="PF14520">
    <property type="entry name" value="HHH_5"/>
    <property type="match status" value="1"/>
</dbReference>
<dbReference type="Pfam" id="PF22745">
    <property type="entry name" value="Nlig-Ia"/>
    <property type="match status" value="1"/>
</dbReference>
<dbReference type="PIRSF" id="PIRSF001604">
    <property type="entry name" value="LigA"/>
    <property type="match status" value="1"/>
</dbReference>
<dbReference type="SMART" id="SM00292">
    <property type="entry name" value="BRCT"/>
    <property type="match status" value="1"/>
</dbReference>
<dbReference type="SMART" id="SM00278">
    <property type="entry name" value="HhH1"/>
    <property type="match status" value="4"/>
</dbReference>
<dbReference type="SMART" id="SM00532">
    <property type="entry name" value="LIGANc"/>
    <property type="match status" value="1"/>
</dbReference>
<dbReference type="SUPFAM" id="SSF52113">
    <property type="entry name" value="BRCT domain"/>
    <property type="match status" value="1"/>
</dbReference>
<dbReference type="SUPFAM" id="SSF56091">
    <property type="entry name" value="DNA ligase/mRNA capping enzyme, catalytic domain"/>
    <property type="match status" value="1"/>
</dbReference>
<dbReference type="SUPFAM" id="SSF50249">
    <property type="entry name" value="Nucleic acid-binding proteins"/>
    <property type="match status" value="1"/>
</dbReference>
<dbReference type="SUPFAM" id="SSF47781">
    <property type="entry name" value="RuvA domain 2-like"/>
    <property type="match status" value="1"/>
</dbReference>
<dbReference type="PROSITE" id="PS50172">
    <property type="entry name" value="BRCT"/>
    <property type="match status" value="1"/>
</dbReference>
<dbReference type="PROSITE" id="PS01055">
    <property type="entry name" value="DNA_LIGASE_N1"/>
    <property type="match status" value="1"/>
</dbReference>
<dbReference type="PROSITE" id="PS01056">
    <property type="entry name" value="DNA_LIGASE_N2"/>
    <property type="match status" value="1"/>
</dbReference>
<evidence type="ECO:0000255" key="1">
    <source>
        <dbReference type="HAMAP-Rule" id="MF_01588"/>
    </source>
</evidence>
<proteinExistence type="inferred from homology"/>
<keyword id="KW-0227">DNA damage</keyword>
<keyword id="KW-0234">DNA repair</keyword>
<keyword id="KW-0235">DNA replication</keyword>
<keyword id="KW-0436">Ligase</keyword>
<keyword id="KW-0460">Magnesium</keyword>
<keyword id="KW-0464">Manganese</keyword>
<keyword id="KW-0479">Metal-binding</keyword>
<keyword id="KW-0520">NAD</keyword>
<keyword id="KW-1185">Reference proteome</keyword>
<keyword id="KW-0862">Zinc</keyword>
<reference key="1">
    <citation type="submission" date="2008-07" db="EMBL/GenBank/DDBJ databases">
        <title>Complete sequence of Geobacter bemidjiensis BEM.</title>
        <authorList>
            <consortium name="US DOE Joint Genome Institute"/>
            <person name="Lucas S."/>
            <person name="Copeland A."/>
            <person name="Lapidus A."/>
            <person name="Glavina del Rio T."/>
            <person name="Dalin E."/>
            <person name="Tice H."/>
            <person name="Bruce D."/>
            <person name="Goodwin L."/>
            <person name="Pitluck S."/>
            <person name="Kiss H."/>
            <person name="Brettin T."/>
            <person name="Detter J.C."/>
            <person name="Han C."/>
            <person name="Kuske C.R."/>
            <person name="Schmutz J."/>
            <person name="Larimer F."/>
            <person name="Land M."/>
            <person name="Hauser L."/>
            <person name="Kyrpides N."/>
            <person name="Lykidis A."/>
            <person name="Lovley D."/>
            <person name="Richardson P."/>
        </authorList>
    </citation>
    <scope>NUCLEOTIDE SEQUENCE [LARGE SCALE GENOMIC DNA]</scope>
    <source>
        <strain>ATCC BAA-1014 / DSM 16622 / JCM 12645 / Bem</strain>
    </source>
</reference>
<protein>
    <recommendedName>
        <fullName evidence="1">DNA ligase</fullName>
        <ecNumber evidence="1">6.5.1.2</ecNumber>
    </recommendedName>
    <alternativeName>
        <fullName evidence="1">Polydeoxyribonucleotide synthase [NAD(+)]</fullName>
    </alternativeName>
</protein>
<sequence length="668" mass="74327">MDKTAAAQRIKWLSSEIERHNRLYYEQDMPEITDAEYDALFRELKELEASYPDLALPDSPTGRVGGRPVAKFTQVRHTTPMLSLENAFTEKDIVDFDDRMKRFLGLSGAEEIGYVCEPKMDGVAVELVYRDGLLAIGSTRGDGLVGEEVTQNLKTIKDIPLRLQTEEPPGLLTVRGEVYLPLEPFRKFNQEREEAGEPPFANPRNAAAGSLRQLDSKITAKRPLSIFCYAPGEVDGVAFQSQSDFLSTIPTWRIPVNPLTRLVPGVQGVLDYYNEMMEKRDDLPYEIDGVVVKVDRFSLQRDLGEKSRSPRWAIAWKFPPRQATTVVNDIVPQVGRTGVITPVAHLEPVNVSGVMVSRATLHNWEEMERKDIRRGDTVVVERAGDVIPAVVQVLVEKRQGSETLLPVPQACPVCGGEVVRIPGEVAVRCVGLNCPAQALERVKHFAARRAMDIDGLGEKFIEQLLNLKLIRNVADIYRLTEEDFMQFERMGKKLAENLLNSIAASKERELSRLIFALGIRHVGEHTAKLLASAFGSMENLAAASEEELTSIREVGPQVAASIADFFKSEENLEVLRELKEHGVNPRVEEKRVGGRFTGKTFVFTGALEKFTRDEAKKMVELEGGHAAGSVSKKTDYVVAGADAGSKLDKAQQLGVRVLSEDDFLELMQ</sequence>
<comment type="function">
    <text evidence="1">DNA ligase that catalyzes the formation of phosphodiester linkages between 5'-phosphoryl and 3'-hydroxyl groups in double-stranded DNA using NAD as a coenzyme and as the energy source for the reaction. It is essential for DNA replication and repair of damaged DNA.</text>
</comment>
<comment type="catalytic activity">
    <reaction evidence="1">
        <text>NAD(+) + (deoxyribonucleotide)n-3'-hydroxyl + 5'-phospho-(deoxyribonucleotide)m = (deoxyribonucleotide)n+m + AMP + beta-nicotinamide D-nucleotide.</text>
        <dbReference type="EC" id="6.5.1.2"/>
    </reaction>
</comment>
<comment type="cofactor">
    <cofactor evidence="1">
        <name>Mg(2+)</name>
        <dbReference type="ChEBI" id="CHEBI:18420"/>
    </cofactor>
    <cofactor evidence="1">
        <name>Mn(2+)</name>
        <dbReference type="ChEBI" id="CHEBI:29035"/>
    </cofactor>
</comment>
<comment type="similarity">
    <text evidence="1">Belongs to the NAD-dependent DNA ligase family. LigA subfamily.</text>
</comment>
<gene>
    <name evidence="1" type="primary">ligA</name>
    <name type="ordered locus">Gbem_1336</name>
</gene>
<accession>B5EIJ0</accession>
<organism>
    <name type="scientific">Citrifermentans bemidjiense (strain ATCC BAA-1014 / DSM 16622 / JCM 12645 / Bem)</name>
    <name type="common">Geobacter bemidjiensis</name>
    <dbReference type="NCBI Taxonomy" id="404380"/>
    <lineage>
        <taxon>Bacteria</taxon>
        <taxon>Pseudomonadati</taxon>
        <taxon>Thermodesulfobacteriota</taxon>
        <taxon>Desulfuromonadia</taxon>
        <taxon>Geobacterales</taxon>
        <taxon>Geobacteraceae</taxon>
        <taxon>Citrifermentans</taxon>
    </lineage>
</organism>
<name>DNLJ_CITBB</name>